<protein>
    <recommendedName>
        <fullName evidence="1">NADH-quinone oxidoreductase subunit H</fullName>
        <ecNumber evidence="1">7.1.1.-</ecNumber>
    </recommendedName>
    <alternativeName>
        <fullName evidence="1">NADH dehydrogenase I subunit H</fullName>
    </alternativeName>
    <alternativeName>
        <fullName evidence="1">NDH-1 subunit H</fullName>
    </alternativeName>
</protein>
<keyword id="KW-0997">Cell inner membrane</keyword>
<keyword id="KW-1003">Cell membrane</keyword>
<keyword id="KW-0472">Membrane</keyword>
<keyword id="KW-0520">NAD</keyword>
<keyword id="KW-0874">Quinone</keyword>
<keyword id="KW-1278">Translocase</keyword>
<keyword id="KW-0812">Transmembrane</keyword>
<keyword id="KW-1133">Transmembrane helix</keyword>
<keyword id="KW-0830">Ubiquinone</keyword>
<comment type="function">
    <text evidence="1">NDH-1 shuttles electrons from NADH, via FMN and iron-sulfur (Fe-S) centers, to quinones in the respiratory chain. The immediate electron acceptor for the enzyme in this species is believed to be ubiquinone. Couples the redox reaction to proton translocation (for every two electrons transferred, four hydrogen ions are translocated across the cytoplasmic membrane), and thus conserves the redox energy in a proton gradient. This subunit may bind ubiquinone.</text>
</comment>
<comment type="catalytic activity">
    <reaction evidence="1">
        <text>a quinone + NADH + 5 H(+)(in) = a quinol + NAD(+) + 4 H(+)(out)</text>
        <dbReference type="Rhea" id="RHEA:57888"/>
        <dbReference type="ChEBI" id="CHEBI:15378"/>
        <dbReference type="ChEBI" id="CHEBI:24646"/>
        <dbReference type="ChEBI" id="CHEBI:57540"/>
        <dbReference type="ChEBI" id="CHEBI:57945"/>
        <dbReference type="ChEBI" id="CHEBI:132124"/>
    </reaction>
</comment>
<comment type="subunit">
    <text evidence="1">NDH-1 is composed of 14 different subunits. Subunits NuoA, H, J, K, L, M, N constitute the membrane sector of the complex.</text>
</comment>
<comment type="subcellular location">
    <subcellularLocation>
        <location evidence="1">Cell inner membrane</location>
        <topology evidence="1">Multi-pass membrane protein</topology>
    </subcellularLocation>
</comment>
<comment type="similarity">
    <text evidence="1">Belongs to the complex I subunit 1 family.</text>
</comment>
<comment type="sequence caution" evidence="2">
    <conflict type="erroneous initiation">
        <sequence resource="EMBL-CDS" id="AAF83123"/>
    </conflict>
</comment>
<name>NUOH_XYLFA</name>
<accession>Q9PGI8</accession>
<feature type="chain" id="PRO_0000244966" description="NADH-quinone oxidoreductase subunit H">
    <location>
        <begin position="1"/>
        <end position="363"/>
    </location>
</feature>
<feature type="transmembrane region" description="Helical" evidence="1">
    <location>
        <begin position="62"/>
        <end position="82"/>
    </location>
</feature>
<feature type="transmembrane region" description="Helical" evidence="1">
    <location>
        <begin position="94"/>
        <end position="114"/>
    </location>
</feature>
<feature type="transmembrane region" description="Helical" evidence="1">
    <location>
        <begin position="127"/>
        <end position="147"/>
    </location>
</feature>
<feature type="transmembrane region" description="Helical" evidence="1">
    <location>
        <begin position="166"/>
        <end position="186"/>
    </location>
</feature>
<feature type="transmembrane region" description="Helical" evidence="1">
    <location>
        <begin position="202"/>
        <end position="222"/>
    </location>
</feature>
<feature type="transmembrane region" description="Helical" evidence="1">
    <location>
        <begin position="239"/>
        <end position="257"/>
    </location>
</feature>
<feature type="transmembrane region" description="Helical" evidence="1">
    <location>
        <begin position="264"/>
        <end position="286"/>
    </location>
</feature>
<feature type="transmembrane region" description="Helical" evidence="1">
    <location>
        <begin position="293"/>
        <end position="313"/>
    </location>
</feature>
<feature type="transmembrane region" description="Helical" evidence="1">
    <location>
        <begin position="339"/>
        <end position="359"/>
    </location>
</feature>
<dbReference type="EC" id="7.1.1.-" evidence="1"/>
<dbReference type="EMBL" id="AE003849">
    <property type="protein sequence ID" value="AAF83123.1"/>
    <property type="status" value="ALT_INIT"/>
    <property type="molecule type" value="Genomic_DNA"/>
</dbReference>
<dbReference type="PIR" id="B82822">
    <property type="entry name" value="B82822"/>
</dbReference>
<dbReference type="RefSeq" id="WP_042462677.1">
    <property type="nucleotide sequence ID" value="NC_002488.3"/>
</dbReference>
<dbReference type="SMR" id="Q9PGI8"/>
<dbReference type="STRING" id="160492.XF_0312"/>
<dbReference type="KEGG" id="xfa:XF_0312"/>
<dbReference type="PATRIC" id="fig|160492.11.peg.340"/>
<dbReference type="eggNOG" id="COG1005">
    <property type="taxonomic scope" value="Bacteria"/>
</dbReference>
<dbReference type="HOGENOM" id="CLU_015134_0_1_6"/>
<dbReference type="Proteomes" id="UP000000812">
    <property type="component" value="Chromosome"/>
</dbReference>
<dbReference type="GO" id="GO:0005886">
    <property type="term" value="C:plasma membrane"/>
    <property type="evidence" value="ECO:0007669"/>
    <property type="project" value="UniProtKB-SubCell"/>
</dbReference>
<dbReference type="GO" id="GO:0003954">
    <property type="term" value="F:NADH dehydrogenase activity"/>
    <property type="evidence" value="ECO:0007669"/>
    <property type="project" value="TreeGrafter"/>
</dbReference>
<dbReference type="GO" id="GO:0016655">
    <property type="term" value="F:oxidoreductase activity, acting on NAD(P)H, quinone or similar compound as acceptor"/>
    <property type="evidence" value="ECO:0007669"/>
    <property type="project" value="UniProtKB-UniRule"/>
</dbReference>
<dbReference type="GO" id="GO:0048038">
    <property type="term" value="F:quinone binding"/>
    <property type="evidence" value="ECO:0007669"/>
    <property type="project" value="UniProtKB-KW"/>
</dbReference>
<dbReference type="GO" id="GO:0009060">
    <property type="term" value="P:aerobic respiration"/>
    <property type="evidence" value="ECO:0007669"/>
    <property type="project" value="TreeGrafter"/>
</dbReference>
<dbReference type="HAMAP" id="MF_01350">
    <property type="entry name" value="NDH1_NuoH"/>
    <property type="match status" value="1"/>
</dbReference>
<dbReference type="InterPro" id="IPR001694">
    <property type="entry name" value="NADH_UbQ_OxRdtase_su1/FPO"/>
</dbReference>
<dbReference type="InterPro" id="IPR018086">
    <property type="entry name" value="NADH_UbQ_OxRdtase_su1_CS"/>
</dbReference>
<dbReference type="NCBIfam" id="NF004741">
    <property type="entry name" value="PRK06076.1-2"/>
    <property type="match status" value="1"/>
</dbReference>
<dbReference type="NCBIfam" id="NF004742">
    <property type="entry name" value="PRK06076.1-3"/>
    <property type="match status" value="1"/>
</dbReference>
<dbReference type="PANTHER" id="PTHR11432">
    <property type="entry name" value="NADH DEHYDROGENASE SUBUNIT 1"/>
    <property type="match status" value="1"/>
</dbReference>
<dbReference type="PANTHER" id="PTHR11432:SF3">
    <property type="entry name" value="NADH-UBIQUINONE OXIDOREDUCTASE CHAIN 1"/>
    <property type="match status" value="1"/>
</dbReference>
<dbReference type="Pfam" id="PF00146">
    <property type="entry name" value="NADHdh"/>
    <property type="match status" value="1"/>
</dbReference>
<dbReference type="PROSITE" id="PS00668">
    <property type="entry name" value="COMPLEX1_ND1_2"/>
    <property type="match status" value="1"/>
</dbReference>
<sequence>MNTWFLNVVDPLHQWFLGFGDIGVVLWTVLKILMIAIPLIVSVAFYVVWERKLIGWMHVRHGPMYVGMGLFQAFADVFKLLFKEVLYPSKAHKAIFVIAPLLTLAPSFAAWAVVPFDTKLVLSNANVGLLYLLAMTSLGVYGIILAGWASNSKYAFLGAMRSAAQVVSYEIAMGFALVGVMIAAGSLNLSQIVMAQAGSSGFFDWFLIPLFPLFIVYWVSGVAETNRSPFDVVEGESEIVAGHMVEYSGSVFALFFLAEYANMILVSFLISIFFLGGWLSPIQGWVSGQVSPLIDWVWNGGWPWLLFKVLFFASAYIWFRASFPRYRYDQIMRLGWKVFIPLTIVWIAVTALMVFSGVIQKGV</sequence>
<reference key="1">
    <citation type="journal article" date="2000" name="Nature">
        <title>The genome sequence of the plant pathogen Xylella fastidiosa.</title>
        <authorList>
            <person name="Simpson A.J.G."/>
            <person name="Reinach F.C."/>
            <person name="Arruda P."/>
            <person name="Abreu F.A."/>
            <person name="Acencio M."/>
            <person name="Alvarenga R."/>
            <person name="Alves L.M.C."/>
            <person name="Araya J.E."/>
            <person name="Baia G.S."/>
            <person name="Baptista C.S."/>
            <person name="Barros M.H."/>
            <person name="Bonaccorsi E.D."/>
            <person name="Bordin S."/>
            <person name="Bove J.M."/>
            <person name="Briones M.R.S."/>
            <person name="Bueno M.R.P."/>
            <person name="Camargo A.A."/>
            <person name="Camargo L.E.A."/>
            <person name="Carraro D.M."/>
            <person name="Carrer H."/>
            <person name="Colauto N.B."/>
            <person name="Colombo C."/>
            <person name="Costa F.F."/>
            <person name="Costa M.C.R."/>
            <person name="Costa-Neto C.M."/>
            <person name="Coutinho L.L."/>
            <person name="Cristofani M."/>
            <person name="Dias-Neto E."/>
            <person name="Docena C."/>
            <person name="El-Dorry H."/>
            <person name="Facincani A.P."/>
            <person name="Ferreira A.J.S."/>
            <person name="Ferreira V.C.A."/>
            <person name="Ferro J.A."/>
            <person name="Fraga J.S."/>
            <person name="Franca S.C."/>
            <person name="Franco M.C."/>
            <person name="Frohme M."/>
            <person name="Furlan L.R."/>
            <person name="Garnier M."/>
            <person name="Goldman G.H."/>
            <person name="Goldman M.H.S."/>
            <person name="Gomes S.L."/>
            <person name="Gruber A."/>
            <person name="Ho P.L."/>
            <person name="Hoheisel J.D."/>
            <person name="Junqueira M.L."/>
            <person name="Kemper E.L."/>
            <person name="Kitajima J.P."/>
            <person name="Krieger J.E."/>
            <person name="Kuramae E.E."/>
            <person name="Laigret F."/>
            <person name="Lambais M.R."/>
            <person name="Leite L.C.C."/>
            <person name="Lemos E.G.M."/>
            <person name="Lemos M.V.F."/>
            <person name="Lopes S.A."/>
            <person name="Lopes C.R."/>
            <person name="Machado J.A."/>
            <person name="Machado M.A."/>
            <person name="Madeira A.M.B.N."/>
            <person name="Madeira H.M.F."/>
            <person name="Marino C.L."/>
            <person name="Marques M.V."/>
            <person name="Martins E.A.L."/>
            <person name="Martins E.M.F."/>
            <person name="Matsukuma A.Y."/>
            <person name="Menck C.F.M."/>
            <person name="Miracca E.C."/>
            <person name="Miyaki C.Y."/>
            <person name="Monteiro-Vitorello C.B."/>
            <person name="Moon D.H."/>
            <person name="Nagai M.A."/>
            <person name="Nascimento A.L.T.O."/>
            <person name="Netto L.E.S."/>
            <person name="Nhani A. Jr."/>
            <person name="Nobrega F.G."/>
            <person name="Nunes L.R."/>
            <person name="Oliveira M.A."/>
            <person name="de Oliveira M.C."/>
            <person name="de Oliveira R.C."/>
            <person name="Palmieri D.A."/>
            <person name="Paris A."/>
            <person name="Peixoto B.R."/>
            <person name="Pereira G.A.G."/>
            <person name="Pereira H.A. Jr."/>
            <person name="Pesquero J.B."/>
            <person name="Quaggio R.B."/>
            <person name="Roberto P.G."/>
            <person name="Rodrigues V."/>
            <person name="de Rosa A.J.M."/>
            <person name="de Rosa V.E. Jr."/>
            <person name="de Sa R.G."/>
            <person name="Santelli R.V."/>
            <person name="Sawasaki H.E."/>
            <person name="da Silva A.C.R."/>
            <person name="da Silva A.M."/>
            <person name="da Silva F.R."/>
            <person name="Silva W.A. Jr."/>
            <person name="da Silveira J.F."/>
            <person name="Silvestri M.L.Z."/>
            <person name="Siqueira W.J."/>
            <person name="de Souza A.A."/>
            <person name="de Souza A.P."/>
            <person name="Terenzi M.F."/>
            <person name="Truffi D."/>
            <person name="Tsai S.M."/>
            <person name="Tsuhako M.H."/>
            <person name="Vallada H."/>
            <person name="Van Sluys M.A."/>
            <person name="Verjovski-Almeida S."/>
            <person name="Vettore A.L."/>
            <person name="Zago M.A."/>
            <person name="Zatz M."/>
            <person name="Meidanis J."/>
            <person name="Setubal J.C."/>
        </authorList>
    </citation>
    <scope>NUCLEOTIDE SEQUENCE [LARGE SCALE GENOMIC DNA]</scope>
    <source>
        <strain>9a5c</strain>
    </source>
</reference>
<organism>
    <name type="scientific">Xylella fastidiosa (strain 9a5c)</name>
    <dbReference type="NCBI Taxonomy" id="160492"/>
    <lineage>
        <taxon>Bacteria</taxon>
        <taxon>Pseudomonadati</taxon>
        <taxon>Pseudomonadota</taxon>
        <taxon>Gammaproteobacteria</taxon>
        <taxon>Lysobacterales</taxon>
        <taxon>Lysobacteraceae</taxon>
        <taxon>Xylella</taxon>
    </lineage>
</organism>
<gene>
    <name evidence="1" type="primary">nuoH</name>
    <name type="synonym">nqo8</name>
    <name type="ordered locus">XF_0312</name>
</gene>
<evidence type="ECO:0000255" key="1">
    <source>
        <dbReference type="HAMAP-Rule" id="MF_01350"/>
    </source>
</evidence>
<evidence type="ECO:0000305" key="2"/>
<proteinExistence type="inferred from homology"/>